<reference key="1">
    <citation type="submission" date="1999-08" db="EMBL/GenBank/DDBJ databases">
        <title>Isolation of glutamine synthase from Fusarium spp.</title>
        <authorList>
            <person name="Chen J."/>
            <person name="Hadwiger L.A."/>
        </authorList>
    </citation>
    <scope>NUCLEOTIDE SEQUENCE [MRNA]</scope>
    <source>
        <strain>W-8</strain>
    </source>
</reference>
<dbReference type="EC" id="6.3.1.2"/>
<dbReference type="EMBL" id="AF175498">
    <property type="protein sequence ID" value="AAD52617.1"/>
    <property type="molecule type" value="mRNA"/>
</dbReference>
<dbReference type="SMR" id="Q9UUN6"/>
<dbReference type="GO" id="GO:0005737">
    <property type="term" value="C:cytoplasm"/>
    <property type="evidence" value="ECO:0007669"/>
    <property type="project" value="UniProtKB-SubCell"/>
</dbReference>
<dbReference type="GO" id="GO:0005524">
    <property type="term" value="F:ATP binding"/>
    <property type="evidence" value="ECO:0007669"/>
    <property type="project" value="UniProtKB-KW"/>
</dbReference>
<dbReference type="GO" id="GO:0004356">
    <property type="term" value="F:glutamine synthetase activity"/>
    <property type="evidence" value="ECO:0007669"/>
    <property type="project" value="UniProtKB-EC"/>
</dbReference>
<dbReference type="GO" id="GO:0006542">
    <property type="term" value="P:glutamine biosynthetic process"/>
    <property type="evidence" value="ECO:0007669"/>
    <property type="project" value="InterPro"/>
</dbReference>
<dbReference type="FunFam" id="3.30.590.10:FF:000004">
    <property type="entry name" value="Glutamine synthetase"/>
    <property type="match status" value="1"/>
</dbReference>
<dbReference type="Gene3D" id="3.10.20.70">
    <property type="entry name" value="Glutamine synthetase, N-terminal domain"/>
    <property type="match status" value="1"/>
</dbReference>
<dbReference type="Gene3D" id="3.30.590.10">
    <property type="entry name" value="Glutamine synthetase/guanido kinase, catalytic domain"/>
    <property type="match status" value="1"/>
</dbReference>
<dbReference type="InterPro" id="IPR008147">
    <property type="entry name" value="Gln_synt_N"/>
</dbReference>
<dbReference type="InterPro" id="IPR036651">
    <property type="entry name" value="Gln_synt_N_sf"/>
</dbReference>
<dbReference type="InterPro" id="IPR014746">
    <property type="entry name" value="Gln_synth/guanido_kin_cat_dom"/>
</dbReference>
<dbReference type="InterPro" id="IPR008146">
    <property type="entry name" value="Gln_synth_cat_dom"/>
</dbReference>
<dbReference type="InterPro" id="IPR027303">
    <property type="entry name" value="Gln_synth_gly_rich_site"/>
</dbReference>
<dbReference type="InterPro" id="IPR027302">
    <property type="entry name" value="Gln_synth_N_conserv_site"/>
</dbReference>
<dbReference type="InterPro" id="IPR050292">
    <property type="entry name" value="Glutamine_Synthetase"/>
</dbReference>
<dbReference type="PANTHER" id="PTHR20852">
    <property type="entry name" value="GLUTAMINE SYNTHETASE"/>
    <property type="match status" value="1"/>
</dbReference>
<dbReference type="PANTHER" id="PTHR20852:SF57">
    <property type="entry name" value="GLUTAMINE SYNTHETASE 2 CYTOPLASMIC"/>
    <property type="match status" value="1"/>
</dbReference>
<dbReference type="Pfam" id="PF00120">
    <property type="entry name" value="Gln-synt_C"/>
    <property type="match status" value="1"/>
</dbReference>
<dbReference type="Pfam" id="PF03951">
    <property type="entry name" value="Gln-synt_N"/>
    <property type="match status" value="1"/>
</dbReference>
<dbReference type="SMART" id="SM01230">
    <property type="entry name" value="Gln-synt_C"/>
    <property type="match status" value="1"/>
</dbReference>
<dbReference type="SUPFAM" id="SSF54368">
    <property type="entry name" value="Glutamine synthetase, N-terminal domain"/>
    <property type="match status" value="1"/>
</dbReference>
<dbReference type="SUPFAM" id="SSF55931">
    <property type="entry name" value="Glutamine synthetase/guanido kinase"/>
    <property type="match status" value="1"/>
</dbReference>
<dbReference type="PROSITE" id="PS00180">
    <property type="entry name" value="GLNA_1"/>
    <property type="match status" value="1"/>
</dbReference>
<dbReference type="PROSITE" id="PS00181">
    <property type="entry name" value="GLNA_ATP"/>
    <property type="match status" value="1"/>
</dbReference>
<dbReference type="PROSITE" id="PS51986">
    <property type="entry name" value="GS_BETA_GRASP"/>
    <property type="match status" value="1"/>
</dbReference>
<dbReference type="PROSITE" id="PS51987">
    <property type="entry name" value="GS_CATALYTIC"/>
    <property type="match status" value="1"/>
</dbReference>
<evidence type="ECO:0000250" key="1"/>
<evidence type="ECO:0000255" key="2">
    <source>
        <dbReference type="PROSITE-ProRule" id="PRU01330"/>
    </source>
</evidence>
<evidence type="ECO:0000255" key="3">
    <source>
        <dbReference type="PROSITE-ProRule" id="PRU01331"/>
    </source>
</evidence>
<evidence type="ECO:0000305" key="4"/>
<gene>
    <name type="primary">GLN1</name>
</gene>
<organism>
    <name type="scientific">Fusarium solani subsp. phaseoli</name>
    <name type="common">Nectria haematococca</name>
    <dbReference type="NCBI Taxonomy" id="120645"/>
    <lineage>
        <taxon>Eukaryota</taxon>
        <taxon>Fungi</taxon>
        <taxon>Dikarya</taxon>
        <taxon>Ascomycota</taxon>
        <taxon>Pezizomycotina</taxon>
        <taxon>Sordariomycetes</taxon>
        <taxon>Hypocreomycetidae</taxon>
        <taxon>Hypocreales</taxon>
        <taxon>Nectriaceae</taxon>
        <taxon>Fusarium</taxon>
        <taxon>Fusarium solani species complex</taxon>
    </lineage>
</organism>
<accession>Q9UUN6</accession>
<feature type="chain" id="PRO_0000153157" description="Glutamine synthetase">
    <location>
        <begin position="1"/>
        <end position="356"/>
    </location>
</feature>
<feature type="domain" description="GS beta-grasp" evidence="2">
    <location>
        <begin position="26"/>
        <end position="105"/>
    </location>
</feature>
<feature type="domain" description="GS catalytic" evidence="3">
    <location>
        <begin position="112"/>
        <end position="356"/>
    </location>
</feature>
<name>GLNA_FUSSH</name>
<comment type="catalytic activity">
    <reaction>
        <text>L-glutamate + NH4(+) + ATP = L-glutamine + ADP + phosphate + H(+)</text>
        <dbReference type="Rhea" id="RHEA:16169"/>
        <dbReference type="ChEBI" id="CHEBI:15378"/>
        <dbReference type="ChEBI" id="CHEBI:28938"/>
        <dbReference type="ChEBI" id="CHEBI:29985"/>
        <dbReference type="ChEBI" id="CHEBI:30616"/>
        <dbReference type="ChEBI" id="CHEBI:43474"/>
        <dbReference type="ChEBI" id="CHEBI:58359"/>
        <dbReference type="ChEBI" id="CHEBI:456216"/>
        <dbReference type="EC" id="6.3.1.2"/>
    </reaction>
</comment>
<comment type="subunit">
    <text evidence="1">Homooctamer.</text>
</comment>
<comment type="subcellular location">
    <subcellularLocation>
        <location evidence="1">Cytoplasm</location>
    </subcellularLocation>
</comment>
<comment type="similarity">
    <text evidence="4">Belongs to the glutamine synthetase family.</text>
</comment>
<keyword id="KW-0067">ATP-binding</keyword>
<keyword id="KW-0963">Cytoplasm</keyword>
<keyword id="KW-0436">Ligase</keyword>
<keyword id="KW-0547">Nucleotide-binding</keyword>
<sequence>MATSAPVTSRTETLAKYLKLDQKGQIMAEYVWVDAAGETRSKSRTLPEKDYKAEDLPVWNFDGSSTNQAPGDNSDVYLRPCAVYPDPFRGSPNIIVLAECWNAGGTPNKFNFRHDCVKVMDTYAEDEPWFGLEQEYTLLGPDNRPYGWPTGGFPAPQGEYYCGVGTGKVVQRDIVEAHYKACLYAGIQISGTNAEVMPAQWEYQVGPCLGIEMGDQLWVSRFFLARITEEFGAKVSLHPKPIAGDWNGAGLHSNFSTKAMREEGGMKVIEEALKKLEPHHAECIAEYGEDNELRLTGRHETGSIDSFSWGVANRGTSIRAPRETAAKGYGYFEDRRPASNADPYRVTKALLQFSLA</sequence>
<proteinExistence type="evidence at transcript level"/>
<protein>
    <recommendedName>
        <fullName>Glutamine synthetase</fullName>
        <shortName>GS</shortName>
        <ecNumber>6.3.1.2</ecNumber>
    </recommendedName>
    <alternativeName>
        <fullName>Glutamate--ammonia ligase</fullName>
    </alternativeName>
</protein>